<name>GCST_LEPIC</name>
<protein>
    <recommendedName>
        <fullName evidence="1">Aminomethyltransferase</fullName>
        <ecNumber evidence="1">2.1.2.10</ecNumber>
    </recommendedName>
    <alternativeName>
        <fullName evidence="1">Glycine cleavage system T protein</fullName>
    </alternativeName>
</protein>
<comment type="function">
    <text evidence="1">The glycine cleavage system catalyzes the degradation of glycine.</text>
</comment>
<comment type="catalytic activity">
    <reaction evidence="1">
        <text>N(6)-[(R)-S(8)-aminomethyldihydrolipoyl]-L-lysyl-[protein] + (6S)-5,6,7,8-tetrahydrofolate = N(6)-[(R)-dihydrolipoyl]-L-lysyl-[protein] + (6R)-5,10-methylene-5,6,7,8-tetrahydrofolate + NH4(+)</text>
        <dbReference type="Rhea" id="RHEA:16945"/>
        <dbReference type="Rhea" id="RHEA-COMP:10475"/>
        <dbReference type="Rhea" id="RHEA-COMP:10492"/>
        <dbReference type="ChEBI" id="CHEBI:15636"/>
        <dbReference type="ChEBI" id="CHEBI:28938"/>
        <dbReference type="ChEBI" id="CHEBI:57453"/>
        <dbReference type="ChEBI" id="CHEBI:83100"/>
        <dbReference type="ChEBI" id="CHEBI:83143"/>
        <dbReference type="EC" id="2.1.2.10"/>
    </reaction>
</comment>
<comment type="subunit">
    <text evidence="1">The glycine cleavage system is composed of four proteins: P, T, L and H.</text>
</comment>
<comment type="similarity">
    <text evidence="1">Belongs to the GcvT family.</text>
</comment>
<comment type="sequence caution" evidence="2">
    <conflict type="erroneous initiation">
        <sequence resource="EMBL-CDS" id="AAS68938"/>
    </conflict>
</comment>
<keyword id="KW-0032">Aminotransferase</keyword>
<keyword id="KW-0808">Transferase</keyword>
<sequence length="371" mass="41583">MSQDKKTPLYETHRTLGAKMIPFGGWDMPVQYSGIIAEHNATREAAGLFDVSHMGEIFITGNPKSILLFLESITCNSVASLSDFQVQYNAILNQNGGLVDDVTIYKFSSEKYMICSNASNYEAVTEHLLEHLPISGVKVDNQSLQWHQIALQGPKANEIFSKFLKRDLDSIQYYRFMLLPYQGEEIIVSRTGYTGEDGFEIYSSIPIGLKLWNELLEFGKPYGLLPCGLGARDTLRIEAKYPLYGHELNDQWTPIESGIGWIVKEKENPYFSSEKILFQKKNGVPSKIVSFALTEAGVPRENFRVLDSQGNEIGKTTSGTFSPSLKKGIGLALIQSEKIKDGEPIQIEIREQPKQAIITMKPFIPGSIRKN</sequence>
<dbReference type="EC" id="2.1.2.10" evidence="1"/>
<dbReference type="EMBL" id="AE016823">
    <property type="protein sequence ID" value="AAS68938.1"/>
    <property type="status" value="ALT_INIT"/>
    <property type="molecule type" value="Genomic_DNA"/>
</dbReference>
<dbReference type="RefSeq" id="WP_001973508.1">
    <property type="nucleotide sequence ID" value="NC_005823.1"/>
</dbReference>
<dbReference type="SMR" id="Q72VI6"/>
<dbReference type="GeneID" id="61143666"/>
<dbReference type="KEGG" id="lic:LIC_10311"/>
<dbReference type="HOGENOM" id="CLU_007884_10_2_12"/>
<dbReference type="Proteomes" id="UP000007037">
    <property type="component" value="Chromosome I"/>
</dbReference>
<dbReference type="GO" id="GO:0005829">
    <property type="term" value="C:cytosol"/>
    <property type="evidence" value="ECO:0007669"/>
    <property type="project" value="TreeGrafter"/>
</dbReference>
<dbReference type="GO" id="GO:0005960">
    <property type="term" value="C:glycine cleavage complex"/>
    <property type="evidence" value="ECO:0007669"/>
    <property type="project" value="InterPro"/>
</dbReference>
<dbReference type="GO" id="GO:0004047">
    <property type="term" value="F:aminomethyltransferase activity"/>
    <property type="evidence" value="ECO:0007669"/>
    <property type="project" value="UniProtKB-UniRule"/>
</dbReference>
<dbReference type="GO" id="GO:0008483">
    <property type="term" value="F:transaminase activity"/>
    <property type="evidence" value="ECO:0007669"/>
    <property type="project" value="UniProtKB-KW"/>
</dbReference>
<dbReference type="GO" id="GO:0019464">
    <property type="term" value="P:glycine decarboxylation via glycine cleavage system"/>
    <property type="evidence" value="ECO:0007669"/>
    <property type="project" value="UniProtKB-UniRule"/>
</dbReference>
<dbReference type="FunFam" id="2.40.30.110:FF:000011">
    <property type="entry name" value="Aminomethyltransferase"/>
    <property type="match status" value="1"/>
</dbReference>
<dbReference type="FunFam" id="4.10.1250.10:FF:000003">
    <property type="entry name" value="Aminomethyltransferase"/>
    <property type="match status" value="1"/>
</dbReference>
<dbReference type="Gene3D" id="2.40.30.110">
    <property type="entry name" value="Aminomethyltransferase beta-barrel domains"/>
    <property type="match status" value="1"/>
</dbReference>
<dbReference type="Gene3D" id="3.30.70.1400">
    <property type="entry name" value="Aminomethyltransferase beta-barrel domains"/>
    <property type="match status" value="1"/>
</dbReference>
<dbReference type="Gene3D" id="4.10.1250.10">
    <property type="entry name" value="Aminomethyltransferase fragment"/>
    <property type="match status" value="1"/>
</dbReference>
<dbReference type="Gene3D" id="3.30.1360.120">
    <property type="entry name" value="Probable tRNA modification gtpase trme, domain 1"/>
    <property type="match status" value="1"/>
</dbReference>
<dbReference type="HAMAP" id="MF_00259">
    <property type="entry name" value="GcvT"/>
    <property type="match status" value="1"/>
</dbReference>
<dbReference type="InterPro" id="IPR006223">
    <property type="entry name" value="GCS_T"/>
</dbReference>
<dbReference type="InterPro" id="IPR022903">
    <property type="entry name" value="GCS_T_bac"/>
</dbReference>
<dbReference type="InterPro" id="IPR013977">
    <property type="entry name" value="GCST_C"/>
</dbReference>
<dbReference type="InterPro" id="IPR006222">
    <property type="entry name" value="GCV_T_N"/>
</dbReference>
<dbReference type="InterPro" id="IPR028896">
    <property type="entry name" value="GcvT/YgfZ/DmdA"/>
</dbReference>
<dbReference type="InterPro" id="IPR029043">
    <property type="entry name" value="GcvT/YgfZ_C"/>
</dbReference>
<dbReference type="InterPro" id="IPR027266">
    <property type="entry name" value="TrmE/GcvT_dom1"/>
</dbReference>
<dbReference type="NCBIfam" id="TIGR00528">
    <property type="entry name" value="gcvT"/>
    <property type="match status" value="1"/>
</dbReference>
<dbReference type="NCBIfam" id="NF001567">
    <property type="entry name" value="PRK00389.1"/>
    <property type="match status" value="1"/>
</dbReference>
<dbReference type="PANTHER" id="PTHR43757">
    <property type="entry name" value="AMINOMETHYLTRANSFERASE"/>
    <property type="match status" value="1"/>
</dbReference>
<dbReference type="PANTHER" id="PTHR43757:SF2">
    <property type="entry name" value="AMINOMETHYLTRANSFERASE, MITOCHONDRIAL"/>
    <property type="match status" value="1"/>
</dbReference>
<dbReference type="Pfam" id="PF01571">
    <property type="entry name" value="GCV_T"/>
    <property type="match status" value="1"/>
</dbReference>
<dbReference type="Pfam" id="PF08669">
    <property type="entry name" value="GCV_T_C"/>
    <property type="match status" value="1"/>
</dbReference>
<dbReference type="PIRSF" id="PIRSF006487">
    <property type="entry name" value="GcvT"/>
    <property type="match status" value="1"/>
</dbReference>
<dbReference type="SUPFAM" id="SSF101790">
    <property type="entry name" value="Aminomethyltransferase beta-barrel domain"/>
    <property type="match status" value="1"/>
</dbReference>
<dbReference type="SUPFAM" id="SSF103025">
    <property type="entry name" value="Folate-binding domain"/>
    <property type="match status" value="1"/>
</dbReference>
<proteinExistence type="inferred from homology"/>
<evidence type="ECO:0000255" key="1">
    <source>
        <dbReference type="HAMAP-Rule" id="MF_00259"/>
    </source>
</evidence>
<evidence type="ECO:0000305" key="2"/>
<reference key="1">
    <citation type="journal article" date="2004" name="J. Bacteriol.">
        <title>Comparative genomics of two Leptospira interrogans serovars reveals novel insights into physiology and pathogenesis.</title>
        <authorList>
            <person name="Nascimento A.L.T.O."/>
            <person name="Ko A.I."/>
            <person name="Martins E.A.L."/>
            <person name="Monteiro-Vitorello C.B."/>
            <person name="Ho P.L."/>
            <person name="Haake D.A."/>
            <person name="Verjovski-Almeida S."/>
            <person name="Hartskeerl R.A."/>
            <person name="Marques M.V."/>
            <person name="Oliveira M.C."/>
            <person name="Menck C.F.M."/>
            <person name="Leite L.C.C."/>
            <person name="Carrer H."/>
            <person name="Coutinho L.L."/>
            <person name="Degrave W.M."/>
            <person name="Dellagostin O.A."/>
            <person name="El-Dorry H."/>
            <person name="Ferro E.S."/>
            <person name="Ferro M.I.T."/>
            <person name="Furlan L.R."/>
            <person name="Gamberini M."/>
            <person name="Giglioti E.A."/>
            <person name="Goes-Neto A."/>
            <person name="Goldman G.H."/>
            <person name="Goldman M.H.S."/>
            <person name="Harakava R."/>
            <person name="Jeronimo S.M.B."/>
            <person name="Junqueira-de-Azevedo I.L.M."/>
            <person name="Kimura E.T."/>
            <person name="Kuramae E.E."/>
            <person name="Lemos E.G.M."/>
            <person name="Lemos M.V.F."/>
            <person name="Marino C.L."/>
            <person name="Nunes L.R."/>
            <person name="de Oliveira R.C."/>
            <person name="Pereira G.G."/>
            <person name="Reis M.S."/>
            <person name="Schriefer A."/>
            <person name="Siqueira W.J."/>
            <person name="Sommer P."/>
            <person name="Tsai S.M."/>
            <person name="Simpson A.J.G."/>
            <person name="Ferro J.A."/>
            <person name="Camargo L.E.A."/>
            <person name="Kitajima J.P."/>
            <person name="Setubal J.C."/>
            <person name="Van Sluys M.A."/>
        </authorList>
    </citation>
    <scope>NUCLEOTIDE SEQUENCE [LARGE SCALE GENOMIC DNA]</scope>
    <source>
        <strain>Fiocruz L1-130</strain>
    </source>
</reference>
<feature type="chain" id="PRO_0000122565" description="Aminomethyltransferase">
    <location>
        <begin position="1"/>
        <end position="371"/>
    </location>
</feature>
<gene>
    <name evidence="1" type="primary">gcvT</name>
    <name type="ordered locus">LIC_10311</name>
</gene>
<organism>
    <name type="scientific">Leptospira interrogans serogroup Icterohaemorrhagiae serovar copenhageni (strain Fiocruz L1-130)</name>
    <dbReference type="NCBI Taxonomy" id="267671"/>
    <lineage>
        <taxon>Bacteria</taxon>
        <taxon>Pseudomonadati</taxon>
        <taxon>Spirochaetota</taxon>
        <taxon>Spirochaetia</taxon>
        <taxon>Leptospirales</taxon>
        <taxon>Leptospiraceae</taxon>
        <taxon>Leptospira</taxon>
    </lineage>
</organism>
<accession>Q72VI6</accession>